<gene>
    <name evidence="1" type="primary">rimO</name>
    <name type="ordered locus">AnaeK_0100</name>
</gene>
<comment type="function">
    <text evidence="1">Catalyzes the methylthiolation of an aspartic acid residue of ribosomal protein uS12.</text>
</comment>
<comment type="catalytic activity">
    <reaction evidence="1">
        <text>L-aspartate(89)-[ribosomal protein uS12]-hydrogen + (sulfur carrier)-SH + AH2 + 2 S-adenosyl-L-methionine = 3-methylsulfanyl-L-aspartate(89)-[ribosomal protein uS12]-hydrogen + (sulfur carrier)-H + 5'-deoxyadenosine + L-methionine + A + S-adenosyl-L-homocysteine + 2 H(+)</text>
        <dbReference type="Rhea" id="RHEA:37087"/>
        <dbReference type="Rhea" id="RHEA-COMP:10460"/>
        <dbReference type="Rhea" id="RHEA-COMP:10461"/>
        <dbReference type="Rhea" id="RHEA-COMP:14737"/>
        <dbReference type="Rhea" id="RHEA-COMP:14739"/>
        <dbReference type="ChEBI" id="CHEBI:13193"/>
        <dbReference type="ChEBI" id="CHEBI:15378"/>
        <dbReference type="ChEBI" id="CHEBI:17319"/>
        <dbReference type="ChEBI" id="CHEBI:17499"/>
        <dbReference type="ChEBI" id="CHEBI:29917"/>
        <dbReference type="ChEBI" id="CHEBI:29961"/>
        <dbReference type="ChEBI" id="CHEBI:57844"/>
        <dbReference type="ChEBI" id="CHEBI:57856"/>
        <dbReference type="ChEBI" id="CHEBI:59789"/>
        <dbReference type="ChEBI" id="CHEBI:64428"/>
        <dbReference type="ChEBI" id="CHEBI:73599"/>
        <dbReference type="EC" id="2.8.4.4"/>
    </reaction>
</comment>
<comment type="cofactor">
    <cofactor evidence="1">
        <name>[4Fe-4S] cluster</name>
        <dbReference type="ChEBI" id="CHEBI:49883"/>
    </cofactor>
    <text evidence="1">Binds 2 [4Fe-4S] clusters. One cluster is coordinated with 3 cysteines and an exchangeable S-adenosyl-L-methionine.</text>
</comment>
<comment type="subcellular location">
    <subcellularLocation>
        <location evidence="1">Cytoplasm</location>
    </subcellularLocation>
</comment>
<comment type="similarity">
    <text evidence="1">Belongs to the methylthiotransferase family. RimO subfamily.</text>
</comment>
<evidence type="ECO:0000255" key="1">
    <source>
        <dbReference type="HAMAP-Rule" id="MF_01865"/>
    </source>
</evidence>
<evidence type="ECO:0000255" key="2">
    <source>
        <dbReference type="PROSITE-ProRule" id="PRU01266"/>
    </source>
</evidence>
<evidence type="ECO:0000256" key="3">
    <source>
        <dbReference type="SAM" id="MobiDB-lite"/>
    </source>
</evidence>
<reference key="1">
    <citation type="submission" date="2008-08" db="EMBL/GenBank/DDBJ databases">
        <title>Complete sequence of Anaeromyxobacter sp. K.</title>
        <authorList>
            <consortium name="US DOE Joint Genome Institute"/>
            <person name="Lucas S."/>
            <person name="Copeland A."/>
            <person name="Lapidus A."/>
            <person name="Glavina del Rio T."/>
            <person name="Dalin E."/>
            <person name="Tice H."/>
            <person name="Bruce D."/>
            <person name="Goodwin L."/>
            <person name="Pitluck S."/>
            <person name="Saunders E."/>
            <person name="Brettin T."/>
            <person name="Detter J.C."/>
            <person name="Han C."/>
            <person name="Larimer F."/>
            <person name="Land M."/>
            <person name="Hauser L."/>
            <person name="Kyrpides N."/>
            <person name="Ovchinnikiva G."/>
            <person name="Beliaev A."/>
        </authorList>
    </citation>
    <scope>NUCLEOTIDE SEQUENCE [LARGE SCALE GENOMIC DNA]</scope>
    <source>
        <strain>K</strain>
    </source>
</reference>
<protein>
    <recommendedName>
        <fullName evidence="1">Ribosomal protein uS12 methylthiotransferase RimO</fullName>
        <shortName evidence="1">uS12 MTTase</shortName>
        <shortName evidence="1">uS12 methylthiotransferase</shortName>
        <ecNumber evidence="1">2.8.4.4</ecNumber>
    </recommendedName>
    <alternativeName>
        <fullName evidence="1">Ribosomal protein uS12 (aspartate-C(3))-methylthiotransferase</fullName>
    </alternativeName>
    <alternativeName>
        <fullName evidence="1">Ribosome maturation factor RimO</fullName>
    </alternativeName>
</protein>
<proteinExistence type="inferred from homology"/>
<keyword id="KW-0004">4Fe-4S</keyword>
<keyword id="KW-0963">Cytoplasm</keyword>
<keyword id="KW-0408">Iron</keyword>
<keyword id="KW-0411">Iron-sulfur</keyword>
<keyword id="KW-0479">Metal-binding</keyword>
<keyword id="KW-0949">S-adenosyl-L-methionine</keyword>
<keyword id="KW-0808">Transferase</keyword>
<organism>
    <name type="scientific">Anaeromyxobacter sp. (strain K)</name>
    <dbReference type="NCBI Taxonomy" id="447217"/>
    <lineage>
        <taxon>Bacteria</taxon>
        <taxon>Pseudomonadati</taxon>
        <taxon>Myxococcota</taxon>
        <taxon>Myxococcia</taxon>
        <taxon>Myxococcales</taxon>
        <taxon>Cystobacterineae</taxon>
        <taxon>Anaeromyxobacteraceae</taxon>
        <taxon>Anaeromyxobacter</taxon>
    </lineage>
</organism>
<dbReference type="EC" id="2.8.4.4" evidence="1"/>
<dbReference type="EMBL" id="CP001131">
    <property type="protein sequence ID" value="ACG71343.1"/>
    <property type="molecule type" value="Genomic_DNA"/>
</dbReference>
<dbReference type="RefSeq" id="WP_012524179.1">
    <property type="nucleotide sequence ID" value="NC_011145.1"/>
</dbReference>
<dbReference type="SMR" id="B4UKQ2"/>
<dbReference type="KEGG" id="ank:AnaeK_0100"/>
<dbReference type="HOGENOM" id="CLU_018697_0_1_7"/>
<dbReference type="OrthoDB" id="9805215at2"/>
<dbReference type="Proteomes" id="UP000001871">
    <property type="component" value="Chromosome"/>
</dbReference>
<dbReference type="GO" id="GO:0005829">
    <property type="term" value="C:cytosol"/>
    <property type="evidence" value="ECO:0007669"/>
    <property type="project" value="TreeGrafter"/>
</dbReference>
<dbReference type="GO" id="GO:0051539">
    <property type="term" value="F:4 iron, 4 sulfur cluster binding"/>
    <property type="evidence" value="ECO:0007669"/>
    <property type="project" value="UniProtKB-UniRule"/>
</dbReference>
<dbReference type="GO" id="GO:0035599">
    <property type="term" value="F:aspartic acid methylthiotransferase activity"/>
    <property type="evidence" value="ECO:0007669"/>
    <property type="project" value="TreeGrafter"/>
</dbReference>
<dbReference type="GO" id="GO:0046872">
    <property type="term" value="F:metal ion binding"/>
    <property type="evidence" value="ECO:0007669"/>
    <property type="project" value="UniProtKB-KW"/>
</dbReference>
<dbReference type="GO" id="GO:0103039">
    <property type="term" value="F:protein methylthiotransferase activity"/>
    <property type="evidence" value="ECO:0007669"/>
    <property type="project" value="UniProtKB-EC"/>
</dbReference>
<dbReference type="GO" id="GO:0006400">
    <property type="term" value="P:tRNA modification"/>
    <property type="evidence" value="ECO:0007669"/>
    <property type="project" value="InterPro"/>
</dbReference>
<dbReference type="CDD" id="cd01335">
    <property type="entry name" value="Radical_SAM"/>
    <property type="match status" value="1"/>
</dbReference>
<dbReference type="FunFam" id="3.40.50.12160:FF:000003">
    <property type="entry name" value="CDK5 regulatory subunit-associated protein 1"/>
    <property type="match status" value="1"/>
</dbReference>
<dbReference type="FunFam" id="3.80.30.20:FF:000001">
    <property type="entry name" value="tRNA-2-methylthio-N(6)-dimethylallyladenosine synthase 2"/>
    <property type="match status" value="1"/>
</dbReference>
<dbReference type="Gene3D" id="3.40.50.12160">
    <property type="entry name" value="Methylthiotransferase, N-terminal domain"/>
    <property type="match status" value="1"/>
</dbReference>
<dbReference type="Gene3D" id="2.40.50.140">
    <property type="entry name" value="Nucleic acid-binding proteins"/>
    <property type="match status" value="1"/>
</dbReference>
<dbReference type="Gene3D" id="3.80.30.20">
    <property type="entry name" value="tm_1862 like domain"/>
    <property type="match status" value="1"/>
</dbReference>
<dbReference type="HAMAP" id="MF_01865">
    <property type="entry name" value="MTTase_RimO"/>
    <property type="match status" value="1"/>
</dbReference>
<dbReference type="InterPro" id="IPR006638">
    <property type="entry name" value="Elp3/MiaA/NifB-like_rSAM"/>
</dbReference>
<dbReference type="InterPro" id="IPR005839">
    <property type="entry name" value="Methylthiotransferase"/>
</dbReference>
<dbReference type="InterPro" id="IPR020612">
    <property type="entry name" value="Methylthiotransferase_CS"/>
</dbReference>
<dbReference type="InterPro" id="IPR013848">
    <property type="entry name" value="Methylthiotransferase_N"/>
</dbReference>
<dbReference type="InterPro" id="IPR038135">
    <property type="entry name" value="Methylthiotransferase_N_sf"/>
</dbReference>
<dbReference type="InterPro" id="IPR012340">
    <property type="entry name" value="NA-bd_OB-fold"/>
</dbReference>
<dbReference type="InterPro" id="IPR005840">
    <property type="entry name" value="Ribosomal_uS12_MeSTrfase_RimO"/>
</dbReference>
<dbReference type="InterPro" id="IPR007197">
    <property type="entry name" value="rSAM"/>
</dbReference>
<dbReference type="InterPro" id="IPR023404">
    <property type="entry name" value="rSAM_horseshoe"/>
</dbReference>
<dbReference type="InterPro" id="IPR002792">
    <property type="entry name" value="TRAM_dom"/>
</dbReference>
<dbReference type="NCBIfam" id="TIGR01125">
    <property type="entry name" value="30S ribosomal protein S12 methylthiotransferase RimO"/>
    <property type="match status" value="1"/>
</dbReference>
<dbReference type="NCBIfam" id="TIGR00089">
    <property type="entry name" value="MiaB/RimO family radical SAM methylthiotransferase"/>
    <property type="match status" value="1"/>
</dbReference>
<dbReference type="PANTHER" id="PTHR43837">
    <property type="entry name" value="RIBOSOMAL PROTEIN S12 METHYLTHIOTRANSFERASE RIMO"/>
    <property type="match status" value="1"/>
</dbReference>
<dbReference type="PANTHER" id="PTHR43837:SF1">
    <property type="entry name" value="RIBOSOMAL PROTEIN US12 METHYLTHIOTRANSFERASE RIMO"/>
    <property type="match status" value="1"/>
</dbReference>
<dbReference type="Pfam" id="PF04055">
    <property type="entry name" value="Radical_SAM"/>
    <property type="match status" value="1"/>
</dbReference>
<dbReference type="Pfam" id="PF18693">
    <property type="entry name" value="TRAM_2"/>
    <property type="match status" value="1"/>
</dbReference>
<dbReference type="Pfam" id="PF00919">
    <property type="entry name" value="UPF0004"/>
    <property type="match status" value="1"/>
</dbReference>
<dbReference type="SFLD" id="SFLDG01082">
    <property type="entry name" value="B12-binding_domain_containing"/>
    <property type="match status" value="1"/>
</dbReference>
<dbReference type="SFLD" id="SFLDS00029">
    <property type="entry name" value="Radical_SAM"/>
    <property type="match status" value="1"/>
</dbReference>
<dbReference type="SFLD" id="SFLDF00274">
    <property type="entry name" value="ribosomal_protein_S12_methylth"/>
    <property type="match status" value="1"/>
</dbReference>
<dbReference type="SMART" id="SM00729">
    <property type="entry name" value="Elp3"/>
    <property type="match status" value="1"/>
</dbReference>
<dbReference type="SUPFAM" id="SSF102114">
    <property type="entry name" value="Radical SAM enzymes"/>
    <property type="match status" value="1"/>
</dbReference>
<dbReference type="PROSITE" id="PS51449">
    <property type="entry name" value="MTTASE_N"/>
    <property type="match status" value="1"/>
</dbReference>
<dbReference type="PROSITE" id="PS01278">
    <property type="entry name" value="MTTASE_RADICAL"/>
    <property type="match status" value="1"/>
</dbReference>
<dbReference type="PROSITE" id="PS51918">
    <property type="entry name" value="RADICAL_SAM"/>
    <property type="match status" value="1"/>
</dbReference>
<dbReference type="PROSITE" id="PS50926">
    <property type="entry name" value="TRAM"/>
    <property type="match status" value="1"/>
</dbReference>
<sequence length="469" mass="51630">MATRVYMHTLGCPKNRVDSEVMLGTLAEAGYRLVQDPAQAEVIVVNTCGFIESAKEESVEAIVELADQKREGRCRKLVVTGCLVQRHAEELARELPEVDHFLGTGAYQDVARIVSDAQAKRLVVPDPDFVHSSATPRVNSLPSHTAYLKIAEGCDNACAFCIIPKLRGGQRSRPIDDLVAEAAALAAQGTVELSLVAQDLTAYGQDLPGKVRLHHLLPELAKVDGIRWIRLHYAYPRDVPDALVAAIADEPRIVKYLDMPLQHSSDRLLRAMKRGRDSVFLRDLLARLRSRIPGLALRTALIVGLPGETEADFEDLLRFVEEQRFERLGVFEYSAEEGTPAAEMADQVPDAVKRERRDRIMAVQQAISRAHQQAMIGRRVEVLVEGRAEETEHLLAGRHAQQAPEIDGLTYINDGVAYPGEIVTVEITDAAEYDLVGRVVARDPSRAARPLPAAPRAAPARKGGLNVLR</sequence>
<accession>B4UKQ2</accession>
<name>RIMO_ANASK</name>
<feature type="chain" id="PRO_0000374700" description="Ribosomal protein uS12 methylthiotransferase RimO">
    <location>
        <begin position="1"/>
        <end position="469"/>
    </location>
</feature>
<feature type="domain" description="MTTase N-terminal" evidence="1">
    <location>
        <begin position="3"/>
        <end position="119"/>
    </location>
</feature>
<feature type="domain" description="Radical SAM core" evidence="2">
    <location>
        <begin position="140"/>
        <end position="370"/>
    </location>
</feature>
<feature type="domain" description="TRAM" evidence="1">
    <location>
        <begin position="373"/>
        <end position="441"/>
    </location>
</feature>
<feature type="region of interest" description="Disordered" evidence="3">
    <location>
        <begin position="444"/>
        <end position="469"/>
    </location>
</feature>
<feature type="compositionally biased region" description="Low complexity" evidence="3">
    <location>
        <begin position="447"/>
        <end position="461"/>
    </location>
</feature>
<feature type="binding site" evidence="1">
    <location>
        <position position="12"/>
    </location>
    <ligand>
        <name>[4Fe-4S] cluster</name>
        <dbReference type="ChEBI" id="CHEBI:49883"/>
        <label>1</label>
    </ligand>
</feature>
<feature type="binding site" evidence="1">
    <location>
        <position position="48"/>
    </location>
    <ligand>
        <name>[4Fe-4S] cluster</name>
        <dbReference type="ChEBI" id="CHEBI:49883"/>
        <label>1</label>
    </ligand>
</feature>
<feature type="binding site" evidence="1">
    <location>
        <position position="82"/>
    </location>
    <ligand>
        <name>[4Fe-4S] cluster</name>
        <dbReference type="ChEBI" id="CHEBI:49883"/>
        <label>1</label>
    </ligand>
</feature>
<feature type="binding site" evidence="1">
    <location>
        <position position="154"/>
    </location>
    <ligand>
        <name>[4Fe-4S] cluster</name>
        <dbReference type="ChEBI" id="CHEBI:49883"/>
        <label>2</label>
        <note>4Fe-4S-S-AdoMet</note>
    </ligand>
</feature>
<feature type="binding site" evidence="1">
    <location>
        <position position="158"/>
    </location>
    <ligand>
        <name>[4Fe-4S] cluster</name>
        <dbReference type="ChEBI" id="CHEBI:49883"/>
        <label>2</label>
        <note>4Fe-4S-S-AdoMet</note>
    </ligand>
</feature>
<feature type="binding site" evidence="1">
    <location>
        <position position="161"/>
    </location>
    <ligand>
        <name>[4Fe-4S] cluster</name>
        <dbReference type="ChEBI" id="CHEBI:49883"/>
        <label>2</label>
        <note>4Fe-4S-S-AdoMet</note>
    </ligand>
</feature>